<accession>P15913</accession>
<organismHost>
    <name type="scientific">Vertebrata</name>
    <dbReference type="NCBI Taxonomy" id="7742"/>
</organismHost>
<organism>
    <name type="scientific">Fowlpox virus (strain NVSL)</name>
    <name type="common">FPV</name>
    <dbReference type="NCBI Taxonomy" id="928301"/>
    <lineage>
        <taxon>Viruses</taxon>
        <taxon>Varidnaviria</taxon>
        <taxon>Bamfordvirae</taxon>
        <taxon>Nucleocytoviricota</taxon>
        <taxon>Pokkesviricetes</taxon>
        <taxon>Chitovirales</taxon>
        <taxon>Poxviridae</taxon>
        <taxon>Chordopoxvirinae</taxon>
        <taxon>Avipoxvirus</taxon>
        <taxon>Fowlpox virus</taxon>
    </lineage>
</organism>
<comment type="function">
    <text evidence="1">Major core structural protein.</text>
</comment>
<comment type="subcellular location">
    <subcellularLocation>
        <location evidence="1">Virion</location>
    </subcellularLocation>
    <text evidence="1">Localizes to the virion core.</text>
</comment>
<comment type="induction">
    <text>Expressed in the late phase of the viral replicative cycle.</text>
</comment>
<comment type="PTM">
    <text evidence="1">Undergoes morphogenesis-associated proteolysis which cleaves the 28 kDa to a 25-kDa product. Proteolytic cleavage of major core proteins P4a (A10L), P4b (A3L), and VP8 (L4R), which occurs at a late stage of core formation, is required for production of infectious mature virions (MV) (By similarity).</text>
</comment>
<comment type="similarity">
    <text evidence="2">Belongs to the chordopoxvirinae VP8 family.</text>
</comment>
<proteinExistence type="evidence at transcript level"/>
<evidence type="ECO:0000250" key="1"/>
<evidence type="ECO:0000305" key="2"/>
<sequence length="253" mass="28345">MNDLLLENLFGEKALCAQVTRDQLLEIIAAGARSKFPKSLLSMYRVTPRVMTRYPLKLITNESITGVVITTVYNLKKNLNIPQNNKLTTQDIERYYLDKSVEVINLMVGNTSLGDLACGRPRRTKSSKKKDPVIFLGISAPLILVMNSKKSINTYIQDKKSDPSSDYVNINPGIGVLENYGNTYLLDIHNPSSVLTISTIYGLDNNMELKKLSTASEIDAYQDVNIGKSVDLKKFNEIFNTMKKHLSLSNFSI</sequence>
<keyword id="KW-0426">Late protein</keyword>
<keyword id="KW-1185">Reference proteome</keyword>
<keyword id="KW-0946">Virion</keyword>
<name>VP8_FOWPN</name>
<gene>
    <name type="ordered locus">FPV131</name>
    <name type="ORF">FP5</name>
</gene>
<reference key="1">
    <citation type="journal article" date="1988" name="J. Gen. Virol.">
        <title>Comparison of a conserved region in fowlpox virus and vaccinia virus genomes and the translocation of the fowlpox virus thymidine kinase gene.</title>
        <authorList>
            <person name="Binns M.M."/>
            <person name="Tomley F.M."/>
            <person name="Campbell J."/>
            <person name="Boursnell M.E.G."/>
        </authorList>
    </citation>
    <scope>NUCLEOTIDE SEQUENCE [GENOMIC DNA]</scope>
    <source>
        <strain>FP-9 / Isolate HP-444</strain>
    </source>
</reference>
<reference key="2">
    <citation type="journal article" date="2000" name="J. Virol.">
        <title>The genome of fowlpox virus.</title>
        <authorList>
            <person name="Afonso C.L."/>
            <person name="Tulman E.R."/>
            <person name="Lu Z."/>
            <person name="Zsak L."/>
            <person name="Kutish G.F."/>
            <person name="Rock D.L."/>
        </authorList>
    </citation>
    <scope>NUCLEOTIDE SEQUENCE [LARGE SCALE GENOMIC DNA]</scope>
</reference>
<dbReference type="EMBL" id="D00320">
    <property type="protein sequence ID" value="BAA00228.1"/>
    <property type="molecule type" value="Genomic_DNA"/>
</dbReference>
<dbReference type="EMBL" id="AF198100">
    <property type="protein sequence ID" value="AAF44475.1"/>
    <property type="molecule type" value="Genomic_DNA"/>
</dbReference>
<dbReference type="PIR" id="JS0225">
    <property type="entry name" value="WMVZP5"/>
</dbReference>
<dbReference type="RefSeq" id="NP_039094.1">
    <property type="nucleotide sequence ID" value="NC_002188.1"/>
</dbReference>
<dbReference type="GeneID" id="1486679"/>
<dbReference type="KEGG" id="vg:1486679"/>
<dbReference type="Proteomes" id="UP000008597">
    <property type="component" value="Segment"/>
</dbReference>
<dbReference type="GO" id="GO:0019028">
    <property type="term" value="C:viral capsid"/>
    <property type="evidence" value="ECO:0007669"/>
    <property type="project" value="InterPro"/>
</dbReference>
<dbReference type="GO" id="GO:0005198">
    <property type="term" value="F:structural molecule activity"/>
    <property type="evidence" value="ECO:0007669"/>
    <property type="project" value="InterPro"/>
</dbReference>
<dbReference type="InterPro" id="IPR007586">
    <property type="entry name" value="VP8_pox_nuc-bd"/>
</dbReference>
<dbReference type="Pfam" id="PF04498">
    <property type="entry name" value="Pox_VP8_L4R"/>
    <property type="match status" value="1"/>
</dbReference>
<protein>
    <recommendedName>
        <fullName>Core protein VP8</fullName>
    </recommendedName>
    <alternativeName>
        <fullName>25 kDa major core protein</fullName>
    </alternativeName>
    <alternativeName>
        <fullName>L4 core protein</fullName>
    </alternativeName>
    <alternativeName>
        <fullName>P25K</fullName>
    </alternativeName>
</protein>
<feature type="propeptide" id="PRO_0000040595" evidence="1">
    <location>
        <begin position="1"/>
        <end position="31"/>
    </location>
</feature>
<feature type="chain" id="PRO_0000040596" description="Core protein VP8">
    <location>
        <begin position="32"/>
        <end position="253"/>
    </location>
</feature>
<feature type="site" description="Cleavage; by core protease I7" evidence="1">
    <location>
        <begin position="31"/>
        <end position="32"/>
    </location>
</feature>